<evidence type="ECO:0000255" key="1">
    <source>
        <dbReference type="HAMAP-Rule" id="MF_01053"/>
    </source>
</evidence>
<organism>
    <name type="scientific">Escherichia coli O127:H6 (strain E2348/69 / EPEC)</name>
    <dbReference type="NCBI Taxonomy" id="574521"/>
    <lineage>
        <taxon>Bacteria</taxon>
        <taxon>Pseudomonadati</taxon>
        <taxon>Pseudomonadota</taxon>
        <taxon>Gammaproteobacteria</taxon>
        <taxon>Enterobacterales</taxon>
        <taxon>Enterobacteriaceae</taxon>
        <taxon>Escherichia</taxon>
    </lineage>
</organism>
<proteinExistence type="inferred from homology"/>
<dbReference type="EMBL" id="FM180568">
    <property type="protein sequence ID" value="CAS07670.1"/>
    <property type="molecule type" value="Genomic_DNA"/>
</dbReference>
<dbReference type="RefSeq" id="WP_000384306.1">
    <property type="nucleotide sequence ID" value="NC_011601.1"/>
</dbReference>
<dbReference type="GeneID" id="93777317"/>
<dbReference type="KEGG" id="ecg:E2348C_0122"/>
<dbReference type="HOGENOM" id="CLU_139226_0_0_6"/>
<dbReference type="Proteomes" id="UP000008205">
    <property type="component" value="Chromosome"/>
</dbReference>
<dbReference type="HAMAP" id="MF_01053">
    <property type="entry name" value="UPF0231"/>
    <property type="match status" value="1"/>
</dbReference>
<dbReference type="InterPro" id="IPR008249">
    <property type="entry name" value="UPF0231"/>
</dbReference>
<dbReference type="NCBIfam" id="NF003574">
    <property type="entry name" value="PRK05248.1-1"/>
    <property type="match status" value="1"/>
</dbReference>
<dbReference type="NCBIfam" id="NF003576">
    <property type="entry name" value="PRK05248.1-3"/>
    <property type="match status" value="1"/>
</dbReference>
<dbReference type="Pfam" id="PF06062">
    <property type="entry name" value="UPF0231"/>
    <property type="match status" value="1"/>
</dbReference>
<dbReference type="PIRSF" id="PIRSF006287">
    <property type="entry name" value="UCP006287"/>
    <property type="match status" value="1"/>
</dbReference>
<name>YACL_ECO27</name>
<keyword id="KW-1185">Reference proteome</keyword>
<feature type="chain" id="PRO_1000149630" description="UPF0231 protein YacL">
    <location>
        <begin position="1"/>
        <end position="120"/>
    </location>
</feature>
<comment type="similarity">
    <text evidence="1">Belongs to the UPF0231 family.</text>
</comment>
<accession>B7UIG7</accession>
<reference key="1">
    <citation type="journal article" date="2009" name="J. Bacteriol.">
        <title>Complete genome sequence and comparative genome analysis of enteropathogenic Escherichia coli O127:H6 strain E2348/69.</title>
        <authorList>
            <person name="Iguchi A."/>
            <person name="Thomson N.R."/>
            <person name="Ogura Y."/>
            <person name="Saunders D."/>
            <person name="Ooka T."/>
            <person name="Henderson I.R."/>
            <person name="Harris D."/>
            <person name="Asadulghani M."/>
            <person name="Kurokawa K."/>
            <person name="Dean P."/>
            <person name="Kenny B."/>
            <person name="Quail M.A."/>
            <person name="Thurston S."/>
            <person name="Dougan G."/>
            <person name="Hayashi T."/>
            <person name="Parkhill J."/>
            <person name="Frankel G."/>
        </authorList>
    </citation>
    <scope>NUCLEOTIDE SEQUENCE [LARGE SCALE GENOMIC DNA]</scope>
    <source>
        <strain>E2348/69 / EPEC</strain>
    </source>
</reference>
<gene>
    <name evidence="1" type="primary">yacL</name>
    <name type="ordered locus">E2348C_0122</name>
</gene>
<protein>
    <recommendedName>
        <fullName evidence="1">UPF0231 protein YacL</fullName>
    </recommendedName>
</protein>
<sequence>MDYEFLRDITGVVKVRMSMGHEVVGHWFNEEVKENLALLDEVEQAAHALKGSERSWQRAGHEYTLWMDGEEVMVRANQLEFAGDEMEEGMNYYDEESLSLCGVEDFLQVVAAYRNFVQQK</sequence>